<reference key="1">
    <citation type="journal article" date="2001" name="Cell">
        <title>A diverse family of GPCRs expressed in specific subsets of nociceptive sensory neurons.</title>
        <authorList>
            <person name="Dong X."/>
            <person name="Han S.-K."/>
            <person name="Zylka M.J."/>
            <person name="Simon M.I."/>
            <person name="Anderson D.J."/>
        </authorList>
    </citation>
    <scope>NUCLEOTIDE SEQUENCE [MRNA]</scope>
    <scope>TISSUE SPECIFICITY</scope>
    <source>
        <strain>C57BL/6J</strain>
        <tissue>Spinal ganglion</tissue>
    </source>
</reference>
<reference key="2">
    <citation type="journal article" date="2009" name="Cell">
        <title>Sensory neuron-specific GPCR Mrgprs are itch receptors mediating chloroquine-induced pruritus.</title>
        <authorList>
            <person name="Liu Q."/>
            <person name="Tang Z."/>
            <person name="Surdenikova L."/>
            <person name="Kim S."/>
            <person name="Patel K.N."/>
            <person name="Kim A."/>
            <person name="Ru F."/>
            <person name="Guan Y."/>
            <person name="Weng H.J."/>
            <person name="Geng Y."/>
            <person name="Undem B.J."/>
            <person name="Kollarik M."/>
            <person name="Chen Z.F."/>
            <person name="Anderson D.J."/>
            <person name="Dong X."/>
        </authorList>
    </citation>
    <scope>TISSUE SPECIFICITY</scope>
    <scope>FUNCTION AS ITCH RECEPTOR</scope>
</reference>
<sequence length="302" mass="34483">MNETIPGSIDIETLIPDLMIIIFGLVGLTGNAIVFWLLGFRMHRTAFLVYILNLALADFLFLLCHIINSTVDLLKFTLPKGIFAFCFHTIKRVLYITGLSMLSAISTERCLSVLCPIWYHCRRPEHTSTVMCAVIWVLSLLICILDGYFCGYLDNHYFNYSVCQAWDIFIGAYLMFLFVVLCLSTLALLARLFCGARNMKFTRLFVTIMLTVLVFLLCGLPWGITWFLLFWIAPGVFVLDYSPLLVLTAINSCANPIIYFFVGSFRQRLNKQTLKMVLQKALQDTPETPENMVEMSRNKAEP</sequence>
<accession>Q91WW3</accession>
<comment type="function">
    <text evidence="1 5">Orphan receptor. May be a receptor for RFamide-family neuropeptides such as NPFF and NPAF, which are analgesic in vivo. May regulate nociceptor function and/or development, including the sensation or modulation of pain (By similarity). Activated by the antimalarial drug chloroquine. Mediates chloroquine-induced itch, in a histamine-independent manner.</text>
</comment>
<comment type="subcellular location">
    <subcellularLocation>
        <location>Cell membrane</location>
        <topology>Multi-pass membrane protein</topology>
    </subcellularLocation>
</comment>
<comment type="tissue specificity">
    <text evidence="4 5">Expressed exclusively in dorsal root ganglia and nodose ganglia. Expressed in a subset of sensory neurons that includes nociceptors. Expressed in the subclass of non-peptidergic sensory neurons that are IB4(+) and VR1(-).</text>
</comment>
<comment type="similarity">
    <text evidence="3">Belongs to the G-protein coupled receptor 1 family. Mas subfamily.</text>
</comment>
<evidence type="ECO:0000250" key="1"/>
<evidence type="ECO:0000255" key="2"/>
<evidence type="ECO:0000255" key="3">
    <source>
        <dbReference type="PROSITE-ProRule" id="PRU00521"/>
    </source>
</evidence>
<evidence type="ECO:0000269" key="4">
    <source>
    </source>
</evidence>
<evidence type="ECO:0000269" key="5">
    <source>
    </source>
</evidence>
<keyword id="KW-0011">Acute phase</keyword>
<keyword id="KW-1003">Cell membrane</keyword>
<keyword id="KW-0297">G-protein coupled receptor</keyword>
<keyword id="KW-0325">Glycoprotein</keyword>
<keyword id="KW-0472">Membrane</keyword>
<keyword id="KW-0675">Receptor</keyword>
<keyword id="KW-1185">Reference proteome</keyword>
<keyword id="KW-0807">Transducer</keyword>
<keyword id="KW-0812">Transmembrane</keyword>
<keyword id="KW-1133">Transmembrane helix</keyword>
<organism>
    <name type="scientific">Mus musculus</name>
    <name type="common">Mouse</name>
    <dbReference type="NCBI Taxonomy" id="10090"/>
    <lineage>
        <taxon>Eukaryota</taxon>
        <taxon>Metazoa</taxon>
        <taxon>Chordata</taxon>
        <taxon>Craniata</taxon>
        <taxon>Vertebrata</taxon>
        <taxon>Euteleostomi</taxon>
        <taxon>Mammalia</taxon>
        <taxon>Eutheria</taxon>
        <taxon>Euarchontoglires</taxon>
        <taxon>Glires</taxon>
        <taxon>Rodentia</taxon>
        <taxon>Myomorpha</taxon>
        <taxon>Muroidea</taxon>
        <taxon>Muridae</taxon>
        <taxon>Murinae</taxon>
        <taxon>Mus</taxon>
        <taxon>Mus</taxon>
    </lineage>
</organism>
<protein>
    <recommendedName>
        <fullName>Mas-related G-protein coupled receptor member A3</fullName>
    </recommendedName>
</protein>
<dbReference type="EMBL" id="AY042193">
    <property type="protein sequence ID" value="AAK91789.1"/>
    <property type="molecule type" value="mRNA"/>
</dbReference>
<dbReference type="RefSeq" id="NP_694707.2">
    <property type="nucleotide sequence ID" value="NM_153067.2"/>
</dbReference>
<dbReference type="SMR" id="Q91WW3"/>
<dbReference type="FunCoup" id="Q91WW3">
    <property type="interactions" value="36"/>
</dbReference>
<dbReference type="STRING" id="10090.ENSMUSP00000135437"/>
<dbReference type="GlyCosmos" id="Q91WW3">
    <property type="glycosylation" value="3 sites, No reported glycans"/>
</dbReference>
<dbReference type="GlyGen" id="Q91WW3">
    <property type="glycosylation" value="3 sites"/>
</dbReference>
<dbReference type="PaxDb" id="10090-ENSMUSP00000135437"/>
<dbReference type="DNASU" id="233222"/>
<dbReference type="GeneID" id="233222"/>
<dbReference type="KEGG" id="mmu:233222"/>
<dbReference type="AGR" id="MGI:2684085"/>
<dbReference type="CTD" id="233222"/>
<dbReference type="MGI" id="MGI:2684085">
    <property type="gene designation" value="Mrgpra3"/>
</dbReference>
<dbReference type="eggNOG" id="ENOG502RTWA">
    <property type="taxonomic scope" value="Eukaryota"/>
</dbReference>
<dbReference type="InParanoid" id="Q91WW3"/>
<dbReference type="OrthoDB" id="6091802at2759"/>
<dbReference type="PhylomeDB" id="Q91WW3"/>
<dbReference type="BioGRID-ORCS" id="233222">
    <property type="hits" value="2 hits in 77 CRISPR screens"/>
</dbReference>
<dbReference type="PRO" id="PR:Q91WW3"/>
<dbReference type="Proteomes" id="UP000000589">
    <property type="component" value="Unplaced"/>
</dbReference>
<dbReference type="RNAct" id="Q91WW3">
    <property type="molecule type" value="protein"/>
</dbReference>
<dbReference type="GO" id="GO:0030424">
    <property type="term" value="C:axon"/>
    <property type="evidence" value="ECO:0000314"/>
    <property type="project" value="UniProtKB"/>
</dbReference>
<dbReference type="GO" id="GO:0032809">
    <property type="term" value="C:neuronal cell body membrane"/>
    <property type="evidence" value="ECO:0000314"/>
    <property type="project" value="UniProtKB"/>
</dbReference>
<dbReference type="GO" id="GO:0004930">
    <property type="term" value="F:G protein-coupled receptor activity"/>
    <property type="evidence" value="ECO:0007669"/>
    <property type="project" value="UniProtKB-KW"/>
</dbReference>
<dbReference type="GO" id="GO:0004888">
    <property type="term" value="F:transmembrane signaling receptor activity"/>
    <property type="evidence" value="ECO:0000315"/>
    <property type="project" value="UniProtKB"/>
</dbReference>
<dbReference type="GO" id="GO:0006953">
    <property type="term" value="P:acute-phase response"/>
    <property type="evidence" value="ECO:0007669"/>
    <property type="project" value="UniProtKB-KW"/>
</dbReference>
<dbReference type="GO" id="GO:0007166">
    <property type="term" value="P:cell surface receptor signaling pathway"/>
    <property type="evidence" value="ECO:0000315"/>
    <property type="project" value="UniProtKB"/>
</dbReference>
<dbReference type="GO" id="GO:0007635">
    <property type="term" value="P:chemosensory behavior"/>
    <property type="evidence" value="ECO:0000314"/>
    <property type="project" value="MGI"/>
</dbReference>
<dbReference type="GO" id="GO:1902349">
    <property type="term" value="P:response to chloroquine"/>
    <property type="evidence" value="ECO:0000315"/>
    <property type="project" value="UniProtKB"/>
</dbReference>
<dbReference type="CDD" id="cd15105">
    <property type="entry name" value="7tmA_MrgprA"/>
    <property type="match status" value="1"/>
</dbReference>
<dbReference type="FunFam" id="1.20.1070.10:FF:000140">
    <property type="entry name" value="Mas-related G-protein coupled receptor member X2"/>
    <property type="match status" value="1"/>
</dbReference>
<dbReference type="Gene3D" id="1.20.1070.10">
    <property type="entry name" value="Rhodopsin 7-helix transmembrane proteins"/>
    <property type="match status" value="1"/>
</dbReference>
<dbReference type="InterPro" id="IPR000276">
    <property type="entry name" value="GPCR_Rhodpsn"/>
</dbReference>
<dbReference type="InterPro" id="IPR017452">
    <property type="entry name" value="GPCR_Rhodpsn_7TM"/>
</dbReference>
<dbReference type="InterPro" id="IPR026233">
    <property type="entry name" value="MRGPCRA"/>
</dbReference>
<dbReference type="InterPro" id="IPR026234">
    <property type="entry name" value="MRGPCRFAMILY"/>
</dbReference>
<dbReference type="PANTHER" id="PTHR11334">
    <property type="entry name" value="MAS-RELATED G-PROTEIN COUPLED RECEPTOR"/>
    <property type="match status" value="1"/>
</dbReference>
<dbReference type="PANTHER" id="PTHR11334:SF33">
    <property type="entry name" value="MAS-RELATED GPR, MEMBER A2A-RELATED"/>
    <property type="match status" value="1"/>
</dbReference>
<dbReference type="Pfam" id="PF00001">
    <property type="entry name" value="7tm_1"/>
    <property type="match status" value="1"/>
</dbReference>
<dbReference type="PRINTS" id="PR00237">
    <property type="entry name" value="GPCRRHODOPSN"/>
</dbReference>
<dbReference type="PRINTS" id="PR02109">
    <property type="entry name" value="MRGPCRA"/>
</dbReference>
<dbReference type="PRINTS" id="PR02108">
    <property type="entry name" value="MRGPCRFAMILY"/>
</dbReference>
<dbReference type="SUPFAM" id="SSF81321">
    <property type="entry name" value="Family A G protein-coupled receptor-like"/>
    <property type="match status" value="1"/>
</dbReference>
<dbReference type="PROSITE" id="PS00237">
    <property type="entry name" value="G_PROTEIN_RECEP_F1_1"/>
    <property type="match status" value="1"/>
</dbReference>
<dbReference type="PROSITE" id="PS50262">
    <property type="entry name" value="G_PROTEIN_RECEP_F1_2"/>
    <property type="match status" value="1"/>
</dbReference>
<gene>
    <name type="primary">Mrgpra3</name>
    <name type="synonym">Mrga3</name>
</gene>
<proteinExistence type="evidence at protein level"/>
<name>MRGA3_MOUSE</name>
<feature type="chain" id="PRO_0000069749" description="Mas-related G-protein coupled receptor member A3">
    <location>
        <begin position="1"/>
        <end position="302"/>
    </location>
</feature>
<feature type="topological domain" description="Extracellular" evidence="2">
    <location>
        <begin position="1"/>
        <end position="17"/>
    </location>
</feature>
<feature type="transmembrane region" description="Helical; Name=1" evidence="2">
    <location>
        <begin position="18"/>
        <end position="38"/>
    </location>
</feature>
<feature type="topological domain" description="Cytoplasmic" evidence="2">
    <location>
        <begin position="39"/>
        <end position="46"/>
    </location>
</feature>
<feature type="transmembrane region" description="Helical; Name=2" evidence="2">
    <location>
        <begin position="47"/>
        <end position="67"/>
    </location>
</feature>
<feature type="topological domain" description="Extracellular" evidence="2">
    <location>
        <begin position="68"/>
        <end position="81"/>
    </location>
</feature>
<feature type="transmembrane region" description="Helical; Name=3" evidence="2">
    <location>
        <begin position="82"/>
        <end position="102"/>
    </location>
</feature>
<feature type="topological domain" description="Cytoplasmic" evidence="2">
    <location>
        <begin position="103"/>
        <end position="129"/>
    </location>
</feature>
<feature type="transmembrane region" description="Helical; Name=4" evidence="2">
    <location>
        <begin position="130"/>
        <end position="150"/>
    </location>
</feature>
<feature type="topological domain" description="Extracellular" evidence="2">
    <location>
        <begin position="151"/>
        <end position="167"/>
    </location>
</feature>
<feature type="transmembrane region" description="Helical; Name=5" evidence="2">
    <location>
        <begin position="168"/>
        <end position="188"/>
    </location>
</feature>
<feature type="topological domain" description="Cytoplasmic" evidence="2">
    <location>
        <begin position="189"/>
        <end position="211"/>
    </location>
</feature>
<feature type="transmembrane region" description="Helical; Name=6" evidence="2">
    <location>
        <begin position="212"/>
        <end position="232"/>
    </location>
</feature>
<feature type="topological domain" description="Extracellular" evidence="2">
    <location>
        <begin position="233"/>
        <end position="242"/>
    </location>
</feature>
<feature type="transmembrane region" description="Helical; Name=7" evidence="2">
    <location>
        <begin position="243"/>
        <end position="263"/>
    </location>
</feature>
<feature type="topological domain" description="Cytoplasmic" evidence="2">
    <location>
        <begin position="264"/>
        <end position="302"/>
    </location>
</feature>
<feature type="glycosylation site" description="N-linked (GlcNAc...) asparagine" evidence="2">
    <location>
        <position position="2"/>
    </location>
</feature>
<feature type="glycosylation site" description="N-linked (GlcNAc...) asparagine" evidence="2">
    <location>
        <position position="68"/>
    </location>
</feature>
<feature type="glycosylation site" description="N-linked (GlcNAc...) asparagine" evidence="2">
    <location>
        <position position="159"/>
    </location>
</feature>